<evidence type="ECO:0000305" key="1"/>
<protein>
    <recommendedName>
        <fullName>Uncharacterized protein L140</fullName>
    </recommendedName>
</protein>
<organism>
    <name type="scientific">Acanthamoeba polyphaga mimivirus</name>
    <name type="common">APMV</name>
    <dbReference type="NCBI Taxonomy" id="212035"/>
    <lineage>
        <taxon>Viruses</taxon>
        <taxon>Varidnaviria</taxon>
        <taxon>Bamfordvirae</taxon>
        <taxon>Nucleocytoviricota</taxon>
        <taxon>Megaviricetes</taxon>
        <taxon>Imitervirales</taxon>
        <taxon>Mimiviridae</taxon>
        <taxon>Megamimivirinae</taxon>
        <taxon>Mimivirus</taxon>
        <taxon>Mimivirus bradfordmassiliense</taxon>
    </lineage>
</organism>
<sequence>MYQYYPKQCHGEFIEPTYYLISQAWNFKYFRDYLDSFANKLKLVYVGLIDINEYDYIDDPTHVYIFCQSITKELLEKKFNKILLNTEQLSIPKYFDIIKNYLKHLTIIDYSIENIALINDPKVIHIPYQYKETEIAVLKKYYQEIPKQYDVAYCGTMSPRRRLILDQLKSNGVVVMEICQSKWGQERDMLIASCKMLINIHHSDNFNVYESFRCDRWAFAQMPVVSEDSIHDDFLDMKYYSVIKFCPYDKIVDTTLQFLSNVNYPTEEIIETIHTIRYQQLDTAVKQLNSLWNPPHHDDKLLRV</sequence>
<comment type="similarity">
    <text evidence="1">Belongs to the mimivirus L137 family.</text>
</comment>
<keyword id="KW-1185">Reference proteome</keyword>
<name>YL140_MIMIV</name>
<accession>Q5UR13</accession>
<organismHost>
    <name type="scientific">Acanthamoeba polyphaga</name>
    <name type="common">Amoeba</name>
    <dbReference type="NCBI Taxonomy" id="5757"/>
</organismHost>
<gene>
    <name type="ordered locus">MIMI_L140</name>
</gene>
<reference key="1">
    <citation type="journal article" date="2004" name="Science">
        <title>The 1.2-megabase genome sequence of Mimivirus.</title>
        <authorList>
            <person name="Raoult D."/>
            <person name="Audic S."/>
            <person name="Robert C."/>
            <person name="Abergel C."/>
            <person name="Renesto P."/>
            <person name="Ogata H."/>
            <person name="La Scola B."/>
            <person name="Susan M."/>
            <person name="Claverie J.-M."/>
        </authorList>
    </citation>
    <scope>NUCLEOTIDE SEQUENCE [LARGE SCALE GENOMIC DNA]</scope>
    <source>
        <strain>Rowbotham-Bradford</strain>
    </source>
</reference>
<proteinExistence type="inferred from homology"/>
<dbReference type="EMBL" id="AY653733">
    <property type="protein sequence ID" value="AAV50415.1"/>
    <property type="molecule type" value="Genomic_DNA"/>
</dbReference>
<dbReference type="KEGG" id="vg:9924739"/>
<dbReference type="Proteomes" id="UP000001134">
    <property type="component" value="Genome"/>
</dbReference>
<feature type="chain" id="PRO_0000071220" description="Uncharacterized protein L140">
    <location>
        <begin position="1"/>
        <end position="304"/>
    </location>
</feature>